<sequence>MEFSQFKVNALMEITACPDLVFVRGQGSWLEDHAGKRYLDFVQGWAVNTLGHCAPEMKRALAEQADKLMNPSPAFYNLPSIELAQRLTSASCFDRVFFANSGAEANEGAIKLARKWGRVNRNGAYKIITMNHGFHGRTLATMSASGKPGWDTMFAPQVEGFPKAEINDLDSVRALIDAQTVAVMLEPVQGEAGVIPATREFMQGLRKLADEHGILFIVDEVQTGMGRTGSLFAYQQFDVIPDIMTLAKGIGGGIPLAALLAREEVCVFAHGDQGGTYNGNPLCAAVGVAVFDTITAPGFMEAAQARTRQLSEGLLALSAKRGLRGERGMGLLRALVLDRDDAPAIVEAARMLAPEGLLLNAPRGNLLRFMPALNVTEADMARMLEQLDGVIAAVRK</sequence>
<accession>Q7W2N9</accession>
<protein>
    <recommendedName>
        <fullName evidence="1">Acetylornithine aminotransferase 2</fullName>
        <shortName evidence="1">ACOAT 2</shortName>
        <ecNumber evidence="1">2.6.1.11</ecNumber>
    </recommendedName>
</protein>
<evidence type="ECO:0000255" key="1">
    <source>
        <dbReference type="HAMAP-Rule" id="MF_01107"/>
    </source>
</evidence>
<name>ARGD2_BORPA</name>
<dbReference type="EC" id="2.6.1.11" evidence="1"/>
<dbReference type="EMBL" id="BX640436">
    <property type="protein sequence ID" value="CAE39644.1"/>
    <property type="molecule type" value="Genomic_DNA"/>
</dbReference>
<dbReference type="RefSeq" id="WP_010929533.1">
    <property type="nucleotide sequence ID" value="NC_002928.3"/>
</dbReference>
<dbReference type="SMR" id="Q7W2N9"/>
<dbReference type="GeneID" id="93206165"/>
<dbReference type="KEGG" id="bpa:BPP4365"/>
<dbReference type="HOGENOM" id="CLU_016922_10_1_4"/>
<dbReference type="UniPathway" id="UPA00068">
    <property type="reaction ID" value="UER00109"/>
</dbReference>
<dbReference type="Proteomes" id="UP000001421">
    <property type="component" value="Chromosome"/>
</dbReference>
<dbReference type="GO" id="GO:0005737">
    <property type="term" value="C:cytoplasm"/>
    <property type="evidence" value="ECO:0007669"/>
    <property type="project" value="UniProtKB-SubCell"/>
</dbReference>
<dbReference type="GO" id="GO:0042802">
    <property type="term" value="F:identical protein binding"/>
    <property type="evidence" value="ECO:0007669"/>
    <property type="project" value="TreeGrafter"/>
</dbReference>
<dbReference type="GO" id="GO:0003992">
    <property type="term" value="F:N2-acetyl-L-ornithine:2-oxoglutarate 5-aminotransferase activity"/>
    <property type="evidence" value="ECO:0007669"/>
    <property type="project" value="UniProtKB-UniRule"/>
</dbReference>
<dbReference type="GO" id="GO:0030170">
    <property type="term" value="F:pyridoxal phosphate binding"/>
    <property type="evidence" value="ECO:0007669"/>
    <property type="project" value="InterPro"/>
</dbReference>
<dbReference type="GO" id="GO:0006526">
    <property type="term" value="P:L-arginine biosynthetic process"/>
    <property type="evidence" value="ECO:0007669"/>
    <property type="project" value="UniProtKB-UniRule"/>
</dbReference>
<dbReference type="CDD" id="cd00610">
    <property type="entry name" value="OAT_like"/>
    <property type="match status" value="1"/>
</dbReference>
<dbReference type="FunFam" id="3.40.640.10:FF:000004">
    <property type="entry name" value="Acetylornithine aminotransferase"/>
    <property type="match status" value="1"/>
</dbReference>
<dbReference type="Gene3D" id="3.90.1150.10">
    <property type="entry name" value="Aspartate Aminotransferase, domain 1"/>
    <property type="match status" value="1"/>
</dbReference>
<dbReference type="Gene3D" id="3.40.640.10">
    <property type="entry name" value="Type I PLP-dependent aspartate aminotransferase-like (Major domain)"/>
    <property type="match status" value="1"/>
</dbReference>
<dbReference type="HAMAP" id="MF_01107">
    <property type="entry name" value="ArgD_aminotrans_3"/>
    <property type="match status" value="1"/>
</dbReference>
<dbReference type="InterPro" id="IPR004636">
    <property type="entry name" value="AcOrn/SuccOrn_fam"/>
</dbReference>
<dbReference type="InterPro" id="IPR005814">
    <property type="entry name" value="Aminotrans_3"/>
</dbReference>
<dbReference type="InterPro" id="IPR049704">
    <property type="entry name" value="Aminotrans_3_PPA_site"/>
</dbReference>
<dbReference type="InterPro" id="IPR050103">
    <property type="entry name" value="Class-III_PLP-dep_AT"/>
</dbReference>
<dbReference type="InterPro" id="IPR015424">
    <property type="entry name" value="PyrdxlP-dep_Trfase"/>
</dbReference>
<dbReference type="InterPro" id="IPR015421">
    <property type="entry name" value="PyrdxlP-dep_Trfase_major"/>
</dbReference>
<dbReference type="InterPro" id="IPR015422">
    <property type="entry name" value="PyrdxlP-dep_Trfase_small"/>
</dbReference>
<dbReference type="NCBIfam" id="NF002325">
    <property type="entry name" value="PRK01278.1"/>
    <property type="match status" value="1"/>
</dbReference>
<dbReference type="NCBIfam" id="NF002985">
    <property type="entry name" value="PRK03715.1"/>
    <property type="match status" value="1"/>
</dbReference>
<dbReference type="PANTHER" id="PTHR11986:SF79">
    <property type="entry name" value="ACETYLORNITHINE AMINOTRANSFERASE, MITOCHONDRIAL"/>
    <property type="match status" value="1"/>
</dbReference>
<dbReference type="PANTHER" id="PTHR11986">
    <property type="entry name" value="AMINOTRANSFERASE CLASS III"/>
    <property type="match status" value="1"/>
</dbReference>
<dbReference type="Pfam" id="PF00202">
    <property type="entry name" value="Aminotran_3"/>
    <property type="match status" value="1"/>
</dbReference>
<dbReference type="PIRSF" id="PIRSF000521">
    <property type="entry name" value="Transaminase_4ab_Lys_Orn"/>
    <property type="match status" value="1"/>
</dbReference>
<dbReference type="SUPFAM" id="SSF53383">
    <property type="entry name" value="PLP-dependent transferases"/>
    <property type="match status" value="1"/>
</dbReference>
<dbReference type="PROSITE" id="PS00600">
    <property type="entry name" value="AA_TRANSFER_CLASS_3"/>
    <property type="match status" value="1"/>
</dbReference>
<feature type="chain" id="PRO_0000112726" description="Acetylornithine aminotransferase 2">
    <location>
        <begin position="1"/>
        <end position="396"/>
    </location>
</feature>
<feature type="binding site" evidence="1">
    <location>
        <begin position="102"/>
        <end position="103"/>
    </location>
    <ligand>
        <name>pyridoxal 5'-phosphate</name>
        <dbReference type="ChEBI" id="CHEBI:597326"/>
    </ligand>
</feature>
<feature type="binding site" evidence="1">
    <location>
        <position position="134"/>
    </location>
    <ligand>
        <name>pyridoxal 5'-phosphate</name>
        <dbReference type="ChEBI" id="CHEBI:597326"/>
    </ligand>
</feature>
<feature type="binding site" evidence="1">
    <location>
        <position position="137"/>
    </location>
    <ligand>
        <name>N(2)-acetyl-L-ornithine</name>
        <dbReference type="ChEBI" id="CHEBI:57805"/>
    </ligand>
</feature>
<feature type="binding site" evidence="1">
    <location>
        <begin position="219"/>
        <end position="222"/>
    </location>
    <ligand>
        <name>pyridoxal 5'-phosphate</name>
        <dbReference type="ChEBI" id="CHEBI:597326"/>
    </ligand>
</feature>
<feature type="binding site" evidence="1">
    <location>
        <position position="276"/>
    </location>
    <ligand>
        <name>pyridoxal 5'-phosphate</name>
        <dbReference type="ChEBI" id="CHEBI:597326"/>
    </ligand>
</feature>
<feature type="modified residue" description="N6-(pyridoxal phosphate)lysine" evidence="1">
    <location>
        <position position="248"/>
    </location>
</feature>
<gene>
    <name evidence="1" type="primary">argD2</name>
    <name type="ordered locus">BPP4365</name>
</gene>
<reference key="1">
    <citation type="journal article" date="2003" name="Nat. Genet.">
        <title>Comparative analysis of the genome sequences of Bordetella pertussis, Bordetella parapertussis and Bordetella bronchiseptica.</title>
        <authorList>
            <person name="Parkhill J."/>
            <person name="Sebaihia M."/>
            <person name="Preston A."/>
            <person name="Murphy L.D."/>
            <person name="Thomson N.R."/>
            <person name="Harris D.E."/>
            <person name="Holden M.T.G."/>
            <person name="Churcher C.M."/>
            <person name="Bentley S.D."/>
            <person name="Mungall K.L."/>
            <person name="Cerdeno-Tarraga A.-M."/>
            <person name="Temple L."/>
            <person name="James K.D."/>
            <person name="Harris B."/>
            <person name="Quail M.A."/>
            <person name="Achtman M."/>
            <person name="Atkin R."/>
            <person name="Baker S."/>
            <person name="Basham D."/>
            <person name="Bason N."/>
            <person name="Cherevach I."/>
            <person name="Chillingworth T."/>
            <person name="Collins M."/>
            <person name="Cronin A."/>
            <person name="Davis P."/>
            <person name="Doggett J."/>
            <person name="Feltwell T."/>
            <person name="Goble A."/>
            <person name="Hamlin N."/>
            <person name="Hauser H."/>
            <person name="Holroyd S."/>
            <person name="Jagels K."/>
            <person name="Leather S."/>
            <person name="Moule S."/>
            <person name="Norberczak H."/>
            <person name="O'Neil S."/>
            <person name="Ormond D."/>
            <person name="Price C."/>
            <person name="Rabbinowitsch E."/>
            <person name="Rutter S."/>
            <person name="Sanders M."/>
            <person name="Saunders D."/>
            <person name="Seeger K."/>
            <person name="Sharp S."/>
            <person name="Simmonds M."/>
            <person name="Skelton J."/>
            <person name="Squares R."/>
            <person name="Squares S."/>
            <person name="Stevens K."/>
            <person name="Unwin L."/>
            <person name="Whitehead S."/>
            <person name="Barrell B.G."/>
            <person name="Maskell D.J."/>
        </authorList>
    </citation>
    <scope>NUCLEOTIDE SEQUENCE [LARGE SCALE GENOMIC DNA]</scope>
    <source>
        <strain>12822 / ATCC BAA-587 / NCTC 13253</strain>
    </source>
</reference>
<organism>
    <name type="scientific">Bordetella parapertussis (strain 12822 / ATCC BAA-587 / NCTC 13253)</name>
    <dbReference type="NCBI Taxonomy" id="257311"/>
    <lineage>
        <taxon>Bacteria</taxon>
        <taxon>Pseudomonadati</taxon>
        <taxon>Pseudomonadota</taxon>
        <taxon>Betaproteobacteria</taxon>
        <taxon>Burkholderiales</taxon>
        <taxon>Alcaligenaceae</taxon>
        <taxon>Bordetella</taxon>
    </lineage>
</organism>
<keyword id="KW-0028">Amino-acid biosynthesis</keyword>
<keyword id="KW-0032">Aminotransferase</keyword>
<keyword id="KW-0055">Arginine biosynthesis</keyword>
<keyword id="KW-0963">Cytoplasm</keyword>
<keyword id="KW-0663">Pyridoxal phosphate</keyword>
<keyword id="KW-0808">Transferase</keyword>
<proteinExistence type="inferred from homology"/>
<comment type="catalytic activity">
    <reaction evidence="1">
        <text>N(2)-acetyl-L-ornithine + 2-oxoglutarate = N-acetyl-L-glutamate 5-semialdehyde + L-glutamate</text>
        <dbReference type="Rhea" id="RHEA:18049"/>
        <dbReference type="ChEBI" id="CHEBI:16810"/>
        <dbReference type="ChEBI" id="CHEBI:29123"/>
        <dbReference type="ChEBI" id="CHEBI:29985"/>
        <dbReference type="ChEBI" id="CHEBI:57805"/>
        <dbReference type="EC" id="2.6.1.11"/>
    </reaction>
</comment>
<comment type="cofactor">
    <cofactor evidence="1">
        <name>pyridoxal 5'-phosphate</name>
        <dbReference type="ChEBI" id="CHEBI:597326"/>
    </cofactor>
    <text evidence="1">Binds 1 pyridoxal phosphate per subunit.</text>
</comment>
<comment type="pathway">
    <text evidence="1">Amino-acid biosynthesis; L-arginine biosynthesis; N(2)-acetyl-L-ornithine from L-glutamate: step 4/4.</text>
</comment>
<comment type="subunit">
    <text evidence="1">Homodimer.</text>
</comment>
<comment type="subcellular location">
    <subcellularLocation>
        <location evidence="1">Cytoplasm</location>
    </subcellularLocation>
</comment>
<comment type="miscellaneous">
    <text evidence="1">May also have succinyldiaminopimelate aminotransferase activity, thus carrying out the corresponding step in lysine biosynthesis.</text>
</comment>
<comment type="similarity">
    <text evidence="1">Belongs to the class-III pyridoxal-phosphate-dependent aminotransferase family. ArgD subfamily.</text>
</comment>